<feature type="signal peptide" evidence="3">
    <location>
        <begin position="1"/>
        <end position="24"/>
    </location>
</feature>
<feature type="chain" id="PRO_5000284436" description="Kunitz-type serine protease inhibitor B3">
    <location>
        <begin position="25"/>
        <end position="84"/>
    </location>
</feature>
<feature type="domain" description="BPTI/Kunitz inhibitor" evidence="4">
    <location>
        <begin position="31"/>
        <end position="81"/>
    </location>
</feature>
<feature type="site" description="Reactive bond for trypsin" evidence="1">
    <location>
        <begin position="41"/>
        <end position="42"/>
    </location>
</feature>
<feature type="glycosylation site" description="N-linked (GlcNAc...) asparagine" evidence="3">
    <location>
        <position position="70"/>
    </location>
</feature>
<feature type="disulfide bond" evidence="4">
    <location>
        <begin position="31"/>
        <end position="81"/>
    </location>
</feature>
<feature type="disulfide bond" evidence="4">
    <location>
        <begin position="40"/>
        <end position="64"/>
    </location>
</feature>
<feature type="disulfide bond" evidence="4">
    <location>
        <begin position="56"/>
        <end position="77"/>
    </location>
</feature>
<protein>
    <recommendedName>
        <fullName>Kunitz-type serine protease inhibitor B3</fullName>
    </recommendedName>
    <alternativeName>
        <fullName evidence="8">BPTI-3</fullName>
    </alternativeName>
    <alternativeName>
        <fullName evidence="5">Trypsin inhibitor 3</fullName>
    </alternativeName>
    <alternativeName>
        <fullName>Trypsin inhibitor B3</fullName>
    </alternativeName>
</protein>
<proteinExistence type="inferred from homology"/>
<dbReference type="EMBL" id="AM411370">
    <property type="protein sequence ID" value="CAL69611.1"/>
    <property type="molecule type" value="mRNA"/>
</dbReference>
<dbReference type="SMR" id="A8Y7P3"/>
<dbReference type="MEROPS" id="I02.062"/>
<dbReference type="GO" id="GO:0005615">
    <property type="term" value="C:extracellular space"/>
    <property type="evidence" value="ECO:0007669"/>
    <property type="project" value="TreeGrafter"/>
</dbReference>
<dbReference type="GO" id="GO:0004867">
    <property type="term" value="F:serine-type endopeptidase inhibitor activity"/>
    <property type="evidence" value="ECO:0007669"/>
    <property type="project" value="UniProtKB-KW"/>
</dbReference>
<dbReference type="GO" id="GO:0090729">
    <property type="term" value="F:toxin activity"/>
    <property type="evidence" value="ECO:0007669"/>
    <property type="project" value="UniProtKB-KW"/>
</dbReference>
<dbReference type="FunFam" id="4.10.410.10:FF:000021">
    <property type="entry name" value="Serine protease inhibitor, putative"/>
    <property type="match status" value="1"/>
</dbReference>
<dbReference type="Gene3D" id="4.10.410.10">
    <property type="entry name" value="Pancreatic trypsin inhibitor Kunitz domain"/>
    <property type="match status" value="1"/>
</dbReference>
<dbReference type="InterPro" id="IPR002223">
    <property type="entry name" value="Kunitz_BPTI"/>
</dbReference>
<dbReference type="InterPro" id="IPR036880">
    <property type="entry name" value="Kunitz_BPTI_sf"/>
</dbReference>
<dbReference type="InterPro" id="IPR020901">
    <property type="entry name" value="Prtase_inh_Kunz-CS"/>
</dbReference>
<dbReference type="InterPro" id="IPR050098">
    <property type="entry name" value="TFPI/VKTCI-like"/>
</dbReference>
<dbReference type="PANTHER" id="PTHR10083">
    <property type="entry name" value="KUNITZ-TYPE PROTEASE INHIBITOR-RELATED"/>
    <property type="match status" value="1"/>
</dbReference>
<dbReference type="PANTHER" id="PTHR10083:SF376">
    <property type="entry name" value="SERINE PEPTIDASE INHIBITOR, KUNITZ TYPE, 3"/>
    <property type="match status" value="1"/>
</dbReference>
<dbReference type="Pfam" id="PF00014">
    <property type="entry name" value="Kunitz_BPTI"/>
    <property type="match status" value="1"/>
</dbReference>
<dbReference type="PRINTS" id="PR00759">
    <property type="entry name" value="BASICPTASE"/>
</dbReference>
<dbReference type="SMART" id="SM00131">
    <property type="entry name" value="KU"/>
    <property type="match status" value="1"/>
</dbReference>
<dbReference type="SUPFAM" id="SSF57362">
    <property type="entry name" value="BPTI-like"/>
    <property type="match status" value="1"/>
</dbReference>
<dbReference type="PROSITE" id="PS00280">
    <property type="entry name" value="BPTI_KUNITZ_1"/>
    <property type="match status" value="1"/>
</dbReference>
<dbReference type="PROSITE" id="PS50279">
    <property type="entry name" value="BPTI_KUNITZ_2"/>
    <property type="match status" value="1"/>
</dbReference>
<sequence>MSSGGLLLLLGLLTLWAELTPISGHDRPTFCNLAPESGRCRGHLRRIYYNLESNKCEVFFYGGCGGNDNNFSTRDECRHTCVGK</sequence>
<reference key="1">
    <citation type="submission" date="2006-11" db="EMBL/GenBank/DDBJ databases">
        <title>BPTI petides from Burmese Daboia russellii siamensis.</title>
        <authorList>
            <person name="Guo C."/>
            <person name="McClean S."/>
            <person name="Shaw C."/>
            <person name="Rao P."/>
            <person name="Ye M."/>
            <person name="Anthony John B."/>
        </authorList>
    </citation>
    <scope>NUCLEOTIDE SEQUENCE [MRNA]</scope>
    <source>
        <strain>Burma</strain>
        <tissue>Venom gland</tissue>
    </source>
</reference>
<name>VKTB3_DABSI</name>
<keyword id="KW-1015">Disulfide bond</keyword>
<keyword id="KW-0325">Glycoprotein</keyword>
<keyword id="KW-1199">Hemostasis impairing toxin</keyword>
<keyword id="KW-0646">Protease inhibitor</keyword>
<keyword id="KW-0964">Secreted</keyword>
<keyword id="KW-0722">Serine protease inhibitor</keyword>
<keyword id="KW-0732">Signal</keyword>
<keyword id="KW-0800">Toxin</keyword>
<accession>A8Y7P3</accession>
<organism>
    <name type="scientific">Daboia siamensis</name>
    <name type="common">Eastern Russel's viper</name>
    <name type="synonym">Daboia russelii siamensis</name>
    <dbReference type="NCBI Taxonomy" id="343250"/>
    <lineage>
        <taxon>Eukaryota</taxon>
        <taxon>Metazoa</taxon>
        <taxon>Chordata</taxon>
        <taxon>Craniata</taxon>
        <taxon>Vertebrata</taxon>
        <taxon>Euteleostomi</taxon>
        <taxon>Lepidosauria</taxon>
        <taxon>Squamata</taxon>
        <taxon>Bifurcata</taxon>
        <taxon>Unidentata</taxon>
        <taxon>Episquamata</taxon>
        <taxon>Toxicofera</taxon>
        <taxon>Serpentes</taxon>
        <taxon>Colubroidea</taxon>
        <taxon>Viperidae</taxon>
        <taxon>Viperinae</taxon>
        <taxon>Daboia</taxon>
    </lineage>
</organism>
<evidence type="ECO:0000250" key="1"/>
<evidence type="ECO:0000250" key="2">
    <source>
        <dbReference type="UniProtKB" id="H6VC06"/>
    </source>
</evidence>
<evidence type="ECO:0000255" key="3"/>
<evidence type="ECO:0000255" key="4">
    <source>
        <dbReference type="PROSITE-ProRule" id="PRU00031"/>
    </source>
</evidence>
<evidence type="ECO:0000303" key="5">
    <source ref="1"/>
</evidence>
<evidence type="ECO:0000305" key="6"/>
<evidence type="ECO:0000305" key="7">
    <source ref="1"/>
</evidence>
<evidence type="ECO:0000312" key="8">
    <source>
        <dbReference type="EMBL" id="CAL69611.1"/>
    </source>
</evidence>
<comment type="function">
    <text evidence="2">Serine protease inhibitor that inhibits plasmin and trypsin.</text>
</comment>
<comment type="subcellular location">
    <subcellularLocation>
        <location evidence="7">Secreted</location>
    </subcellularLocation>
</comment>
<comment type="tissue specificity">
    <text evidence="7">Expressed by the venom gland.</text>
</comment>
<comment type="similarity">
    <text evidence="6">Belongs to the venom Kunitz-type family.</text>
</comment>